<organism>
    <name type="scientific">Sulfurovum sp. (strain NBC37-1)</name>
    <dbReference type="NCBI Taxonomy" id="387093"/>
    <lineage>
        <taxon>Bacteria</taxon>
        <taxon>Pseudomonadati</taxon>
        <taxon>Campylobacterota</taxon>
        <taxon>Epsilonproteobacteria</taxon>
        <taxon>Campylobacterales</taxon>
        <taxon>Sulfurovaceae</taxon>
        <taxon>Sulfurovum</taxon>
    </lineage>
</organism>
<name>ARLY_SULNB</name>
<dbReference type="EC" id="4.3.2.1" evidence="1"/>
<dbReference type="EMBL" id="AP009179">
    <property type="protein sequence ID" value="BAF71504.1"/>
    <property type="molecule type" value="Genomic_DNA"/>
</dbReference>
<dbReference type="RefSeq" id="WP_011980237.1">
    <property type="nucleotide sequence ID" value="NC_009663.1"/>
</dbReference>
<dbReference type="SMR" id="A6Q7P5"/>
<dbReference type="STRING" id="387093.SUN_0544"/>
<dbReference type="KEGG" id="sun:SUN_0544"/>
<dbReference type="eggNOG" id="COG0165">
    <property type="taxonomic scope" value="Bacteria"/>
</dbReference>
<dbReference type="HOGENOM" id="CLU_027272_2_3_7"/>
<dbReference type="OrthoDB" id="9769623at2"/>
<dbReference type="UniPathway" id="UPA00068">
    <property type="reaction ID" value="UER00114"/>
</dbReference>
<dbReference type="Proteomes" id="UP000006378">
    <property type="component" value="Chromosome"/>
</dbReference>
<dbReference type="GO" id="GO:0005829">
    <property type="term" value="C:cytosol"/>
    <property type="evidence" value="ECO:0007669"/>
    <property type="project" value="TreeGrafter"/>
</dbReference>
<dbReference type="GO" id="GO:0004056">
    <property type="term" value="F:argininosuccinate lyase activity"/>
    <property type="evidence" value="ECO:0007669"/>
    <property type="project" value="UniProtKB-UniRule"/>
</dbReference>
<dbReference type="GO" id="GO:0042450">
    <property type="term" value="P:arginine biosynthetic process via ornithine"/>
    <property type="evidence" value="ECO:0007669"/>
    <property type="project" value="InterPro"/>
</dbReference>
<dbReference type="GO" id="GO:0006526">
    <property type="term" value="P:L-arginine biosynthetic process"/>
    <property type="evidence" value="ECO:0007669"/>
    <property type="project" value="UniProtKB-UniRule"/>
</dbReference>
<dbReference type="CDD" id="cd01359">
    <property type="entry name" value="Argininosuccinate_lyase"/>
    <property type="match status" value="1"/>
</dbReference>
<dbReference type="FunFam" id="1.10.275.10:FF:000002">
    <property type="entry name" value="Argininosuccinate lyase"/>
    <property type="match status" value="1"/>
</dbReference>
<dbReference type="FunFam" id="1.10.40.30:FF:000001">
    <property type="entry name" value="Argininosuccinate lyase"/>
    <property type="match status" value="1"/>
</dbReference>
<dbReference type="FunFam" id="1.20.200.10:FF:000015">
    <property type="entry name" value="argininosuccinate lyase isoform X2"/>
    <property type="match status" value="1"/>
</dbReference>
<dbReference type="Gene3D" id="1.10.40.30">
    <property type="entry name" value="Fumarase/aspartase (C-terminal domain)"/>
    <property type="match status" value="1"/>
</dbReference>
<dbReference type="Gene3D" id="1.20.200.10">
    <property type="entry name" value="Fumarase/aspartase (Central domain)"/>
    <property type="match status" value="1"/>
</dbReference>
<dbReference type="Gene3D" id="1.10.275.10">
    <property type="entry name" value="Fumarase/aspartase (N-terminal domain)"/>
    <property type="match status" value="1"/>
</dbReference>
<dbReference type="HAMAP" id="MF_00006">
    <property type="entry name" value="Arg_succ_lyase"/>
    <property type="match status" value="1"/>
</dbReference>
<dbReference type="InterPro" id="IPR029419">
    <property type="entry name" value="Arg_succ_lyase_C"/>
</dbReference>
<dbReference type="InterPro" id="IPR009049">
    <property type="entry name" value="Argininosuccinate_lyase"/>
</dbReference>
<dbReference type="InterPro" id="IPR024083">
    <property type="entry name" value="Fumarase/histidase_N"/>
</dbReference>
<dbReference type="InterPro" id="IPR020557">
    <property type="entry name" value="Fumarate_lyase_CS"/>
</dbReference>
<dbReference type="InterPro" id="IPR000362">
    <property type="entry name" value="Fumarate_lyase_fam"/>
</dbReference>
<dbReference type="InterPro" id="IPR022761">
    <property type="entry name" value="Fumarate_lyase_N"/>
</dbReference>
<dbReference type="InterPro" id="IPR008948">
    <property type="entry name" value="L-Aspartase-like"/>
</dbReference>
<dbReference type="NCBIfam" id="TIGR00838">
    <property type="entry name" value="argH"/>
    <property type="match status" value="1"/>
</dbReference>
<dbReference type="PANTHER" id="PTHR43814">
    <property type="entry name" value="ARGININOSUCCINATE LYASE"/>
    <property type="match status" value="1"/>
</dbReference>
<dbReference type="PANTHER" id="PTHR43814:SF1">
    <property type="entry name" value="ARGININOSUCCINATE LYASE"/>
    <property type="match status" value="1"/>
</dbReference>
<dbReference type="Pfam" id="PF14698">
    <property type="entry name" value="ASL_C2"/>
    <property type="match status" value="1"/>
</dbReference>
<dbReference type="Pfam" id="PF00206">
    <property type="entry name" value="Lyase_1"/>
    <property type="match status" value="1"/>
</dbReference>
<dbReference type="PRINTS" id="PR00145">
    <property type="entry name" value="ARGSUCLYASE"/>
</dbReference>
<dbReference type="PRINTS" id="PR00149">
    <property type="entry name" value="FUMRATELYASE"/>
</dbReference>
<dbReference type="SUPFAM" id="SSF48557">
    <property type="entry name" value="L-aspartase-like"/>
    <property type="match status" value="1"/>
</dbReference>
<dbReference type="PROSITE" id="PS00163">
    <property type="entry name" value="FUMARATE_LYASES"/>
    <property type="match status" value="1"/>
</dbReference>
<protein>
    <recommendedName>
        <fullName evidence="1">Argininosuccinate lyase</fullName>
        <shortName evidence="1">ASAL</shortName>
        <ecNumber evidence="1">4.3.2.1</ecNumber>
    </recommendedName>
    <alternativeName>
        <fullName evidence="1">Arginosuccinase</fullName>
    </alternativeName>
</protein>
<gene>
    <name evidence="1" type="primary">argH</name>
    <name type="ordered locus">SUN_0544</name>
</gene>
<accession>A6Q7P5</accession>
<comment type="catalytic activity">
    <reaction evidence="1">
        <text>2-(N(omega)-L-arginino)succinate = fumarate + L-arginine</text>
        <dbReference type="Rhea" id="RHEA:24020"/>
        <dbReference type="ChEBI" id="CHEBI:29806"/>
        <dbReference type="ChEBI" id="CHEBI:32682"/>
        <dbReference type="ChEBI" id="CHEBI:57472"/>
        <dbReference type="EC" id="4.3.2.1"/>
    </reaction>
</comment>
<comment type="pathway">
    <text evidence="1">Amino-acid biosynthesis; L-arginine biosynthesis; L-arginine from L-ornithine and carbamoyl phosphate: step 3/3.</text>
</comment>
<comment type="subcellular location">
    <subcellularLocation>
        <location evidence="1">Cytoplasm</location>
    </subcellularLocation>
</comment>
<comment type="similarity">
    <text evidence="1">Belongs to the lyase 1 family. Argininosuccinate lyase subfamily.</text>
</comment>
<feature type="chain" id="PRO_0000321459" description="Argininosuccinate lyase">
    <location>
        <begin position="1"/>
        <end position="464"/>
    </location>
</feature>
<proteinExistence type="inferred from homology"/>
<sequence>MSKKIASARISEKSSKLLQDLNNSLPFDKVLYREDIEGSRAHAFMLSEQGIISREDQEKIDAGLQDILADIESGLFKLEGDDEDIHMAIEGELTRRIGDAGKRLHTARSRNDQVALDFRLYVQRNTKTIAELLLKNIETFVKVAEENAETMLPGMTHLQHAQPINFGYHMMAYASMFKRDYERFMSSYERNNYSPIGCAALAGTPHPINRQTTSDKLGFNAPTLNCLDTVSDRDFALEILFNISTVMMHMSRLSEELILWSAAEFKWVTLSDRHATGSSIMPQKKNPDIPELLRGKTGRVNGNLVALLTVMKSLPLAYNKDMQEDKEGVFDSVRTAILSLQVLEEMIADMTVNKEAMERACMVGHLSATDLADYLVKEQGLPFRDAYHITGNVVNLAEEKGLDISELSLEDLQSIDERIAEDVVALLDNRASMNARQSEGGTATVRTLEQIEDLKKWLEKQDEK</sequence>
<reference key="1">
    <citation type="journal article" date="2007" name="Proc. Natl. Acad. Sci. U.S.A.">
        <title>Deep-sea vent epsilon-proteobacterial genomes provide insights into emergence of pathogens.</title>
        <authorList>
            <person name="Nakagawa S."/>
            <person name="Takaki Y."/>
            <person name="Shimamura S."/>
            <person name="Reysenbach A.-L."/>
            <person name="Takai K."/>
            <person name="Horikoshi K."/>
        </authorList>
    </citation>
    <scope>NUCLEOTIDE SEQUENCE [LARGE SCALE GENOMIC DNA]</scope>
    <source>
        <strain>NBC37-1</strain>
    </source>
</reference>
<evidence type="ECO:0000255" key="1">
    <source>
        <dbReference type="HAMAP-Rule" id="MF_00006"/>
    </source>
</evidence>
<keyword id="KW-0028">Amino-acid biosynthesis</keyword>
<keyword id="KW-0055">Arginine biosynthesis</keyword>
<keyword id="KW-0963">Cytoplasm</keyword>
<keyword id="KW-0456">Lyase</keyword>